<sequence length="325" mass="34933">MTTDVKDELSRLVVKSVSARRAEVTSLLRFAGGLHIVGGRVVVEAELDLGSIARRLRKEIFELYGYTAVVHVLSASGIRKSTRYVLRVANDGEALARQTGLLDMRGRPVRGLPAQVVGGSIDDAEAAWRGAFLAHGSLTEPGRSSALEVSCPGPEAALALVGAARRLGVGAKAREVRGADRVVVRDGEAIGALLTRMGAQDTRLVWEERRLRREVRATANRLANFDDANLRRSARAAVAAAARVERALEILGDTVPEHLASAGKLRVEHRQASLEELGRLADPPMTKDAVAGRIRRLLSMADRKAKVDGIPDTESVVTPDLLEDA</sequence>
<protein>
    <recommendedName>
        <fullName evidence="1">Probable cell division protein WhiA</fullName>
    </recommendedName>
</protein>
<feature type="chain" id="PRO_1000184857" description="Probable cell division protein WhiA">
    <location>
        <begin position="1"/>
        <end position="325"/>
    </location>
</feature>
<feature type="DNA-binding region" description="H-T-H motif" evidence="1">
    <location>
        <begin position="273"/>
        <end position="306"/>
    </location>
</feature>
<proteinExistence type="inferred from homology"/>
<organism>
    <name type="scientific">Mycobacterium bovis (strain BCG / Tokyo 172 / ATCC 35737 / TMC 1019)</name>
    <dbReference type="NCBI Taxonomy" id="561275"/>
    <lineage>
        <taxon>Bacteria</taxon>
        <taxon>Bacillati</taxon>
        <taxon>Actinomycetota</taxon>
        <taxon>Actinomycetes</taxon>
        <taxon>Mycobacteriales</taxon>
        <taxon>Mycobacteriaceae</taxon>
        <taxon>Mycobacterium</taxon>
        <taxon>Mycobacterium tuberculosis complex</taxon>
    </lineage>
</organism>
<name>WHIA_MYCBT</name>
<accession>C1AN68</accession>
<evidence type="ECO:0000255" key="1">
    <source>
        <dbReference type="HAMAP-Rule" id="MF_01420"/>
    </source>
</evidence>
<gene>
    <name evidence="1" type="primary">whiA</name>
    <name type="ordered locus">JTY_1459</name>
</gene>
<reference key="1">
    <citation type="journal article" date="2009" name="Vaccine">
        <title>Whole genome sequence analysis of Mycobacterium bovis bacillus Calmette-Guerin (BCG) Tokyo 172: a comparative study of BCG vaccine substrains.</title>
        <authorList>
            <person name="Seki M."/>
            <person name="Honda I."/>
            <person name="Fujita I."/>
            <person name="Yano I."/>
            <person name="Yamamoto S."/>
            <person name="Koyama A."/>
        </authorList>
    </citation>
    <scope>NUCLEOTIDE SEQUENCE [LARGE SCALE GENOMIC DNA]</scope>
    <source>
        <strain>BCG / Tokyo 172 / ATCC 35737 / TMC 1019</strain>
    </source>
</reference>
<comment type="function">
    <text evidence="1">Involved in cell division and chromosome segregation.</text>
</comment>
<comment type="similarity">
    <text evidence="1">Belongs to the WhiA family.</text>
</comment>
<keyword id="KW-0131">Cell cycle</keyword>
<keyword id="KW-0132">Cell division</keyword>
<keyword id="KW-0238">DNA-binding</keyword>
<dbReference type="EMBL" id="AP010918">
    <property type="protein sequence ID" value="BAH25747.1"/>
    <property type="molecule type" value="Genomic_DNA"/>
</dbReference>
<dbReference type="RefSeq" id="WP_003901156.1">
    <property type="nucleotide sequence ID" value="NZ_CP014566.1"/>
</dbReference>
<dbReference type="SMR" id="C1AN68"/>
<dbReference type="GeneID" id="45425401"/>
<dbReference type="KEGG" id="mbt:JTY_1459"/>
<dbReference type="HOGENOM" id="CLU_053282_0_0_11"/>
<dbReference type="GO" id="GO:0003677">
    <property type="term" value="F:DNA binding"/>
    <property type="evidence" value="ECO:0007669"/>
    <property type="project" value="UniProtKB-UniRule"/>
</dbReference>
<dbReference type="GO" id="GO:0051301">
    <property type="term" value="P:cell division"/>
    <property type="evidence" value="ECO:0007669"/>
    <property type="project" value="UniProtKB-UniRule"/>
</dbReference>
<dbReference type="GO" id="GO:0043937">
    <property type="term" value="P:regulation of sporulation"/>
    <property type="evidence" value="ECO:0007669"/>
    <property type="project" value="InterPro"/>
</dbReference>
<dbReference type="FunFam" id="3.10.28.10:FF:000001">
    <property type="entry name" value="Probable cell division protein WhiA"/>
    <property type="match status" value="1"/>
</dbReference>
<dbReference type="Gene3D" id="3.10.28.10">
    <property type="entry name" value="Homing endonucleases"/>
    <property type="match status" value="1"/>
</dbReference>
<dbReference type="HAMAP" id="MF_01420">
    <property type="entry name" value="HTH_type_WhiA"/>
    <property type="match status" value="1"/>
</dbReference>
<dbReference type="InterPro" id="IPR027434">
    <property type="entry name" value="Homing_endonucl"/>
</dbReference>
<dbReference type="InterPro" id="IPR018478">
    <property type="entry name" value="Sporu_reg_WhiA_N_dom"/>
</dbReference>
<dbReference type="InterPro" id="IPR003802">
    <property type="entry name" value="Sporulation_regulator_WhiA"/>
</dbReference>
<dbReference type="InterPro" id="IPR023054">
    <property type="entry name" value="Sporulation_regulator_WhiA_C"/>
</dbReference>
<dbReference type="InterPro" id="IPR039518">
    <property type="entry name" value="WhiA_LAGLIDADG_dom"/>
</dbReference>
<dbReference type="NCBIfam" id="TIGR00647">
    <property type="entry name" value="DNA_bind_WhiA"/>
    <property type="match status" value="1"/>
</dbReference>
<dbReference type="PANTHER" id="PTHR37307">
    <property type="entry name" value="CELL DIVISION PROTEIN WHIA-RELATED"/>
    <property type="match status" value="1"/>
</dbReference>
<dbReference type="PANTHER" id="PTHR37307:SF1">
    <property type="entry name" value="CELL DIVISION PROTEIN WHIA-RELATED"/>
    <property type="match status" value="1"/>
</dbReference>
<dbReference type="Pfam" id="PF02650">
    <property type="entry name" value="HTH_WhiA"/>
    <property type="match status" value="1"/>
</dbReference>
<dbReference type="Pfam" id="PF14527">
    <property type="entry name" value="LAGLIDADG_WhiA"/>
    <property type="match status" value="1"/>
</dbReference>
<dbReference type="Pfam" id="PF10298">
    <property type="entry name" value="WhiA_N"/>
    <property type="match status" value="1"/>
</dbReference>